<gene>
    <name evidence="1" type="primary">rplS</name>
    <name type="ordered locus">HH_0935</name>
</gene>
<reference key="1">
    <citation type="journal article" date="2003" name="Proc. Natl. Acad. Sci. U.S.A.">
        <title>The complete genome sequence of the carcinogenic bacterium Helicobacter hepaticus.</title>
        <authorList>
            <person name="Suerbaum S."/>
            <person name="Josenhans C."/>
            <person name="Sterzenbach T."/>
            <person name="Drescher B."/>
            <person name="Brandt P."/>
            <person name="Bell M."/>
            <person name="Droege M."/>
            <person name="Fartmann B."/>
            <person name="Fischer H.-P."/>
            <person name="Ge Z."/>
            <person name="Hoerster A."/>
            <person name="Holland R."/>
            <person name="Klein K."/>
            <person name="Koenig J."/>
            <person name="Macko L."/>
            <person name="Mendz G.L."/>
            <person name="Nyakatura G."/>
            <person name="Schauer D.B."/>
            <person name="Shen Z."/>
            <person name="Weber J."/>
            <person name="Frosch M."/>
            <person name="Fox J.G."/>
        </authorList>
    </citation>
    <scope>NUCLEOTIDE SEQUENCE [LARGE SCALE GENOMIC DNA]</scope>
    <source>
        <strain>ATCC 51449 / 3B1</strain>
    </source>
</reference>
<organism>
    <name type="scientific">Helicobacter hepaticus (strain ATCC 51449 / 3B1)</name>
    <dbReference type="NCBI Taxonomy" id="235279"/>
    <lineage>
        <taxon>Bacteria</taxon>
        <taxon>Pseudomonadati</taxon>
        <taxon>Campylobacterota</taxon>
        <taxon>Epsilonproteobacteria</taxon>
        <taxon>Campylobacterales</taxon>
        <taxon>Helicobacteraceae</taxon>
        <taxon>Helicobacter</taxon>
    </lineage>
</organism>
<accession>Q7VHN0</accession>
<evidence type="ECO:0000255" key="1">
    <source>
        <dbReference type="HAMAP-Rule" id="MF_00402"/>
    </source>
</evidence>
<evidence type="ECO:0000305" key="2"/>
<dbReference type="EMBL" id="AE017125">
    <property type="protein sequence ID" value="AAP77532.1"/>
    <property type="molecule type" value="Genomic_DNA"/>
</dbReference>
<dbReference type="RefSeq" id="WP_011115775.1">
    <property type="nucleotide sequence ID" value="NC_004917.1"/>
</dbReference>
<dbReference type="SMR" id="Q7VHN0"/>
<dbReference type="STRING" id="235279.HH_0935"/>
<dbReference type="KEGG" id="hhe:HH_0935"/>
<dbReference type="eggNOG" id="COG0335">
    <property type="taxonomic scope" value="Bacteria"/>
</dbReference>
<dbReference type="HOGENOM" id="CLU_103507_2_2_7"/>
<dbReference type="OrthoDB" id="9803541at2"/>
<dbReference type="Proteomes" id="UP000002495">
    <property type="component" value="Chromosome"/>
</dbReference>
<dbReference type="GO" id="GO:0022625">
    <property type="term" value="C:cytosolic large ribosomal subunit"/>
    <property type="evidence" value="ECO:0007669"/>
    <property type="project" value="TreeGrafter"/>
</dbReference>
<dbReference type="GO" id="GO:0003735">
    <property type="term" value="F:structural constituent of ribosome"/>
    <property type="evidence" value="ECO:0007669"/>
    <property type="project" value="InterPro"/>
</dbReference>
<dbReference type="GO" id="GO:0006412">
    <property type="term" value="P:translation"/>
    <property type="evidence" value="ECO:0007669"/>
    <property type="project" value="UniProtKB-UniRule"/>
</dbReference>
<dbReference type="FunFam" id="2.30.30.790:FF:000001">
    <property type="entry name" value="50S ribosomal protein L19"/>
    <property type="match status" value="1"/>
</dbReference>
<dbReference type="Gene3D" id="2.30.30.790">
    <property type="match status" value="1"/>
</dbReference>
<dbReference type="HAMAP" id="MF_00402">
    <property type="entry name" value="Ribosomal_bL19"/>
    <property type="match status" value="1"/>
</dbReference>
<dbReference type="InterPro" id="IPR001857">
    <property type="entry name" value="Ribosomal_bL19"/>
</dbReference>
<dbReference type="InterPro" id="IPR018257">
    <property type="entry name" value="Ribosomal_bL19_CS"/>
</dbReference>
<dbReference type="InterPro" id="IPR038657">
    <property type="entry name" value="Ribosomal_bL19_sf"/>
</dbReference>
<dbReference type="InterPro" id="IPR008991">
    <property type="entry name" value="Translation_prot_SH3-like_sf"/>
</dbReference>
<dbReference type="NCBIfam" id="TIGR01024">
    <property type="entry name" value="rplS_bact"/>
    <property type="match status" value="1"/>
</dbReference>
<dbReference type="PANTHER" id="PTHR15680:SF9">
    <property type="entry name" value="LARGE RIBOSOMAL SUBUNIT PROTEIN BL19M"/>
    <property type="match status" value="1"/>
</dbReference>
<dbReference type="PANTHER" id="PTHR15680">
    <property type="entry name" value="RIBOSOMAL PROTEIN L19"/>
    <property type="match status" value="1"/>
</dbReference>
<dbReference type="Pfam" id="PF01245">
    <property type="entry name" value="Ribosomal_L19"/>
    <property type="match status" value="1"/>
</dbReference>
<dbReference type="PIRSF" id="PIRSF002191">
    <property type="entry name" value="Ribosomal_L19"/>
    <property type="match status" value="1"/>
</dbReference>
<dbReference type="PRINTS" id="PR00061">
    <property type="entry name" value="RIBOSOMALL19"/>
</dbReference>
<dbReference type="SUPFAM" id="SSF50104">
    <property type="entry name" value="Translation proteins SH3-like domain"/>
    <property type="match status" value="1"/>
</dbReference>
<dbReference type="PROSITE" id="PS01015">
    <property type="entry name" value="RIBOSOMAL_L19"/>
    <property type="match status" value="1"/>
</dbReference>
<comment type="function">
    <text evidence="1">This protein is located at the 30S-50S ribosomal subunit interface and may play a role in the structure and function of the aminoacyl-tRNA binding site.</text>
</comment>
<comment type="similarity">
    <text evidence="1">Belongs to the bacterial ribosomal protein bL19 family.</text>
</comment>
<feature type="chain" id="PRO_0000163464" description="Large ribosomal subunit protein bL19">
    <location>
        <begin position="1"/>
        <end position="118"/>
    </location>
</feature>
<name>RL19_HELHP</name>
<keyword id="KW-1185">Reference proteome</keyword>
<keyword id="KW-0687">Ribonucleoprotein</keyword>
<keyword id="KW-0689">Ribosomal protein</keyword>
<proteinExistence type="inferred from homology"/>
<protein>
    <recommendedName>
        <fullName evidence="1">Large ribosomal subunit protein bL19</fullName>
    </recommendedName>
    <alternativeName>
        <fullName evidence="2">50S ribosomal protein L19</fullName>
    </alternativeName>
</protein>
<sequence length="118" mass="13658">MRNRYIQSFQEAQIGKKQVPQFKAGDTLRLGIKIQEGDKTRIQHFEGVCISIRGNGVDRTFTTRKMGANNIGVEKTFPLYSESLDSIEVLRIGRVRRAKLYYLRSRRGKAARIKELRK</sequence>